<comment type="function">
    <text evidence="1">As ValRS can inadvertently accommodate and process structurally similar amino acids such as threonine, to avoid such errors, it has a 'posttransfer' editing activity that hydrolyzes mischarged Thr-tRNA(Val) in a tRNA-dependent manner (By similarity). Catalyzes the attachment of valine to tRNA(Val).</text>
</comment>
<comment type="catalytic activity">
    <reaction evidence="2">
        <text>tRNA(Val) + L-valine + ATP = L-valyl-tRNA(Val) + AMP + diphosphate</text>
        <dbReference type="Rhea" id="RHEA:10704"/>
        <dbReference type="Rhea" id="RHEA-COMP:9672"/>
        <dbReference type="Rhea" id="RHEA-COMP:9708"/>
        <dbReference type="ChEBI" id="CHEBI:30616"/>
        <dbReference type="ChEBI" id="CHEBI:33019"/>
        <dbReference type="ChEBI" id="CHEBI:57762"/>
        <dbReference type="ChEBI" id="CHEBI:78442"/>
        <dbReference type="ChEBI" id="CHEBI:78537"/>
        <dbReference type="ChEBI" id="CHEBI:456215"/>
        <dbReference type="EC" id="6.1.1.9"/>
    </reaction>
</comment>
<comment type="subunit">
    <text evidence="2">Monomer.</text>
</comment>
<comment type="subcellular location">
    <subcellularLocation>
        <location evidence="2">Cytoplasm</location>
    </subcellularLocation>
</comment>
<comment type="induction">
    <text evidence="3">By valine starvation. Is transcribed by itself and in an operon with folC. A GUC triplet (Val, the specifier codon) 190 nucleotides upstream of the initiator codon confers induction upon valaine starvation; replacing it with ACC (Thr) confers induction upon threonine starvation, replacing it with UAA (stop), renders the gene uninducible. Negatively regulates its own transcription; this depends on the presence of the GUC specifier codon.</text>
</comment>
<comment type="domain">
    <text evidence="2">ValRS has two distinct active sites: one for aminoacylation and one for editing. The misactivated threonine is translocated from the active site to the editing site.</text>
</comment>
<comment type="domain">
    <text evidence="2">The C-terminal coiled-coil domain is crucial for aminoacylation activity.</text>
</comment>
<comment type="disruption phenotype">
    <text evidence="3">Cells lacking this gene grow normally, suggesting there is a second functional gene with valine-tRNA synthetase activity in B.subtilis.</text>
</comment>
<comment type="similarity">
    <text evidence="2">Belongs to the class-I aminoacyl-tRNA synthetase family. ValS type 1 subfamily.</text>
</comment>
<sequence>METNEQTMPTKYDPAAVEKDRYDFWLKGKFFEAGSDQTKEPYSVVIPPPNVTGRLHLGHAWDTTLQDIVTRMKRMQGYDVLWLPGMDHAGIATQAKVEAKLREEGKSRYDLGREKFLEETWKWKEEYADFIRSQWAKLGLGLDYSRERFTLDEGLSKAVREVFVKLYEKGLIYRGEYIINWDPATKTALSDIEVIYKDVQGAFYHMSYPLADGSGSIEIATTRPETMLGDTAVAVHPEDERYKHLIGKTVILPIVNREIPIVGDDYVDMEFGSGAVKITPAHDPNDFELGNRHNLERILVMNEDGTMNENALQYQGMDRFECRKKLVKDLQEAGVLFKIEDHMHSVGHSERSGAVVEPYLSTQWFVRMQPLADAAIELQKKEEKVNFVPDRFEKTYLHWMENIRDWCISRQLWWGHRIPAWYHKETGELYVGLEAPEDSENWEQDTDVLDTWFSSALWPFSTMGWPDVTAEDFKRYYPTDVLVTGYDIIFFWVSRMIFQGIEFTGERPFKDVLIHGLIRDEQGRKMSKSLGNGVDPMDVIDKYGADSLRYFLATGSSPGQDLRFSYEKVESTWNFANKIWNASRFALMNMDGMTYDELDLSGEKSVADKWILTRLNETIEHVTQLADRYEFGEVGRHLYNFIWDDFCDWYIEMAKLPLYGEDEAAKKTTRSILAYVLDQTMRLLHPFMPFLTEEIWQHLPHQGESITVSQWPAVVPEHTDTEAAADMKLLVELIRSVRNIRSEVNTPMSKQVELYIKTSTDEIASRLEANRSYVERFTNPSVLKIGTDIEAVDKAMTAVVSGAEVILPLEGLINIDEEIARLQKEFDKLTKEVERVQKKLGNEGFMKKAPAHVIDEEREKEKDYVAKRDAVQKRMAELKG</sequence>
<proteinExistence type="evidence at protein level"/>
<protein>
    <recommendedName>
        <fullName evidence="2">Valine--tRNA ligase</fullName>
        <ecNumber evidence="2">6.1.1.9</ecNumber>
    </recommendedName>
    <alternativeName>
        <fullName evidence="2">Valyl-tRNA synthetase</fullName>
        <shortName evidence="2">ValRS</shortName>
    </alternativeName>
</protein>
<accession>Q05873</accession>
<name>SYV_BACSU</name>
<reference key="1">
    <citation type="journal article" date="1997" name="J. Bacteriol.">
        <title>Structure and regulation of expression of the Bacillus subtilis valyl-tRNA synthetase gene.</title>
        <authorList>
            <person name="Luo D."/>
            <person name="Leautey J."/>
            <person name="Grunberg-Manago M."/>
            <person name="Putzer H."/>
        </authorList>
    </citation>
    <scope>NUCLEOTIDE SEQUENCE [GENOMIC DNA]</scope>
    <scope>CHARACTERIZATION</scope>
    <scope>INDUCTION MECHANISM</scope>
    <scope>OPERON STRUCTURE</scope>
    <scope>DISRUPTION PHENOTYPE</scope>
    <source>
        <strain>168</strain>
    </source>
</reference>
<reference key="2">
    <citation type="journal article" date="1997" name="Nature">
        <title>The complete genome sequence of the Gram-positive bacterium Bacillus subtilis.</title>
        <authorList>
            <person name="Kunst F."/>
            <person name="Ogasawara N."/>
            <person name="Moszer I."/>
            <person name="Albertini A.M."/>
            <person name="Alloni G."/>
            <person name="Azevedo V."/>
            <person name="Bertero M.G."/>
            <person name="Bessieres P."/>
            <person name="Bolotin A."/>
            <person name="Borchert S."/>
            <person name="Borriss R."/>
            <person name="Boursier L."/>
            <person name="Brans A."/>
            <person name="Braun M."/>
            <person name="Brignell S.C."/>
            <person name="Bron S."/>
            <person name="Brouillet S."/>
            <person name="Bruschi C.V."/>
            <person name="Caldwell B."/>
            <person name="Capuano V."/>
            <person name="Carter N.M."/>
            <person name="Choi S.-K."/>
            <person name="Codani J.-J."/>
            <person name="Connerton I.F."/>
            <person name="Cummings N.J."/>
            <person name="Daniel R.A."/>
            <person name="Denizot F."/>
            <person name="Devine K.M."/>
            <person name="Duesterhoeft A."/>
            <person name="Ehrlich S.D."/>
            <person name="Emmerson P.T."/>
            <person name="Entian K.-D."/>
            <person name="Errington J."/>
            <person name="Fabret C."/>
            <person name="Ferrari E."/>
            <person name="Foulger D."/>
            <person name="Fritz C."/>
            <person name="Fujita M."/>
            <person name="Fujita Y."/>
            <person name="Fuma S."/>
            <person name="Galizzi A."/>
            <person name="Galleron N."/>
            <person name="Ghim S.-Y."/>
            <person name="Glaser P."/>
            <person name="Goffeau A."/>
            <person name="Golightly E.J."/>
            <person name="Grandi G."/>
            <person name="Guiseppi G."/>
            <person name="Guy B.J."/>
            <person name="Haga K."/>
            <person name="Haiech J."/>
            <person name="Harwood C.R."/>
            <person name="Henaut A."/>
            <person name="Hilbert H."/>
            <person name="Holsappel S."/>
            <person name="Hosono S."/>
            <person name="Hullo M.-F."/>
            <person name="Itaya M."/>
            <person name="Jones L.-M."/>
            <person name="Joris B."/>
            <person name="Karamata D."/>
            <person name="Kasahara Y."/>
            <person name="Klaerr-Blanchard M."/>
            <person name="Klein C."/>
            <person name="Kobayashi Y."/>
            <person name="Koetter P."/>
            <person name="Koningstein G."/>
            <person name="Krogh S."/>
            <person name="Kumano M."/>
            <person name="Kurita K."/>
            <person name="Lapidus A."/>
            <person name="Lardinois S."/>
            <person name="Lauber J."/>
            <person name="Lazarevic V."/>
            <person name="Lee S.-M."/>
            <person name="Levine A."/>
            <person name="Liu H."/>
            <person name="Masuda S."/>
            <person name="Mauel C."/>
            <person name="Medigue C."/>
            <person name="Medina N."/>
            <person name="Mellado R.P."/>
            <person name="Mizuno M."/>
            <person name="Moestl D."/>
            <person name="Nakai S."/>
            <person name="Noback M."/>
            <person name="Noone D."/>
            <person name="O'Reilly M."/>
            <person name="Ogawa K."/>
            <person name="Ogiwara A."/>
            <person name="Oudega B."/>
            <person name="Park S.-H."/>
            <person name="Parro V."/>
            <person name="Pohl T.M."/>
            <person name="Portetelle D."/>
            <person name="Porwollik S."/>
            <person name="Prescott A.M."/>
            <person name="Presecan E."/>
            <person name="Pujic P."/>
            <person name="Purnelle B."/>
            <person name="Rapoport G."/>
            <person name="Rey M."/>
            <person name="Reynolds S."/>
            <person name="Rieger M."/>
            <person name="Rivolta C."/>
            <person name="Rocha E."/>
            <person name="Roche B."/>
            <person name="Rose M."/>
            <person name="Sadaie Y."/>
            <person name="Sato T."/>
            <person name="Scanlan E."/>
            <person name="Schleich S."/>
            <person name="Schroeter R."/>
            <person name="Scoffone F."/>
            <person name="Sekiguchi J."/>
            <person name="Sekowska A."/>
            <person name="Seror S.J."/>
            <person name="Serror P."/>
            <person name="Shin B.-S."/>
            <person name="Soldo B."/>
            <person name="Sorokin A."/>
            <person name="Tacconi E."/>
            <person name="Takagi T."/>
            <person name="Takahashi H."/>
            <person name="Takemaru K."/>
            <person name="Takeuchi M."/>
            <person name="Tamakoshi A."/>
            <person name="Tanaka T."/>
            <person name="Terpstra P."/>
            <person name="Tognoni A."/>
            <person name="Tosato V."/>
            <person name="Uchiyama S."/>
            <person name="Vandenbol M."/>
            <person name="Vannier F."/>
            <person name="Vassarotti A."/>
            <person name="Viari A."/>
            <person name="Wambutt R."/>
            <person name="Wedler E."/>
            <person name="Wedler H."/>
            <person name="Weitzenegger T."/>
            <person name="Winters P."/>
            <person name="Wipat A."/>
            <person name="Yamamoto H."/>
            <person name="Yamane K."/>
            <person name="Yasumoto K."/>
            <person name="Yata K."/>
            <person name="Yoshida K."/>
            <person name="Yoshikawa H.-F."/>
            <person name="Zumstein E."/>
            <person name="Yoshikawa H."/>
            <person name="Danchin A."/>
        </authorList>
    </citation>
    <scope>NUCLEOTIDE SEQUENCE [LARGE SCALE GENOMIC DNA]</scope>
    <source>
        <strain>168</strain>
    </source>
</reference>
<reference key="3">
    <citation type="journal article" date="2009" name="Microbiology">
        <title>From a consortium sequence to a unified sequence: the Bacillus subtilis 168 reference genome a decade later.</title>
        <authorList>
            <person name="Barbe V."/>
            <person name="Cruveiller S."/>
            <person name="Kunst F."/>
            <person name="Lenoble P."/>
            <person name="Meurice G."/>
            <person name="Sekowska A."/>
            <person name="Vallenet D."/>
            <person name="Wang T."/>
            <person name="Moszer I."/>
            <person name="Medigue C."/>
            <person name="Danchin A."/>
        </authorList>
    </citation>
    <scope>SEQUENCE REVISION TO 379</scope>
</reference>
<reference key="4">
    <citation type="journal article" date="1993" name="J. Bacteriol.">
        <title>Sporulation gene spoIIB from Bacillus subtilis.</title>
        <authorList>
            <person name="Margolis P.S."/>
            <person name="Driks A."/>
            <person name="Losick R."/>
        </authorList>
    </citation>
    <scope>NUCLEOTIDE SEQUENCE [GENOMIC DNA] OF 825-880</scope>
    <source>
        <strain>168 / PY79</strain>
    </source>
</reference>
<feature type="chain" id="PRO_0000106214" description="Valine--tRNA ligase">
    <location>
        <begin position="1"/>
        <end position="880"/>
    </location>
</feature>
<feature type="coiled-coil region" evidence="2">
    <location>
        <begin position="809"/>
        <end position="879"/>
    </location>
</feature>
<feature type="short sequence motif" description="'HIGH' region">
    <location>
        <begin position="49"/>
        <end position="59"/>
    </location>
</feature>
<feature type="short sequence motif" description="'KMSKS' region">
    <location>
        <begin position="525"/>
        <end position="529"/>
    </location>
</feature>
<feature type="binding site" evidence="2">
    <location>
        <position position="528"/>
    </location>
    <ligand>
        <name>ATP</name>
        <dbReference type="ChEBI" id="CHEBI:30616"/>
    </ligand>
</feature>
<feature type="sequence conflict" description="In Ref. 1; CAA54458." evidence="4" ref="1">
    <original>Q</original>
    <variation>E</variation>
    <location>
        <position position="379"/>
    </location>
</feature>
<keyword id="KW-0030">Aminoacyl-tRNA synthetase</keyword>
<keyword id="KW-0067">ATP-binding</keyword>
<keyword id="KW-0175">Coiled coil</keyword>
<keyword id="KW-0963">Cytoplasm</keyword>
<keyword id="KW-0436">Ligase</keyword>
<keyword id="KW-0547">Nucleotide-binding</keyword>
<keyword id="KW-0648">Protein biosynthesis</keyword>
<keyword id="KW-1185">Reference proteome</keyword>
<keyword id="KW-0678">Repressor</keyword>
<dbReference type="EC" id="6.1.1.9" evidence="2"/>
<dbReference type="EMBL" id="X77239">
    <property type="protein sequence ID" value="CAA54458.1"/>
    <property type="molecule type" value="Genomic_DNA"/>
</dbReference>
<dbReference type="EMBL" id="AL009126">
    <property type="protein sequence ID" value="CAB14769.2"/>
    <property type="molecule type" value="Genomic_DNA"/>
</dbReference>
<dbReference type="EMBL" id="L04520">
    <property type="protein sequence ID" value="AAB59020.1"/>
    <property type="molecule type" value="Genomic_DNA"/>
</dbReference>
<dbReference type="PIR" id="S41420">
    <property type="entry name" value="S41420"/>
</dbReference>
<dbReference type="RefSeq" id="NP_390687.2">
    <property type="nucleotide sequence ID" value="NC_000964.3"/>
</dbReference>
<dbReference type="RefSeq" id="WP_004398606.1">
    <property type="nucleotide sequence ID" value="NZ_OZ025638.1"/>
</dbReference>
<dbReference type="SMR" id="Q05873"/>
<dbReference type="FunCoup" id="Q05873">
    <property type="interactions" value="706"/>
</dbReference>
<dbReference type="STRING" id="224308.BSU28090"/>
<dbReference type="jPOST" id="Q05873"/>
<dbReference type="PaxDb" id="224308-BSU28090"/>
<dbReference type="EnsemblBacteria" id="CAB14769">
    <property type="protein sequence ID" value="CAB14769"/>
    <property type="gene ID" value="BSU_28090"/>
</dbReference>
<dbReference type="GeneID" id="937491"/>
<dbReference type="KEGG" id="bsu:BSU28090"/>
<dbReference type="PATRIC" id="fig|224308.179.peg.3051"/>
<dbReference type="eggNOG" id="COG0525">
    <property type="taxonomic scope" value="Bacteria"/>
</dbReference>
<dbReference type="InParanoid" id="Q05873"/>
<dbReference type="OrthoDB" id="9810365at2"/>
<dbReference type="PhylomeDB" id="Q05873"/>
<dbReference type="BioCyc" id="BSUB:BSU28090-MONOMER"/>
<dbReference type="Proteomes" id="UP000001570">
    <property type="component" value="Chromosome"/>
</dbReference>
<dbReference type="GO" id="GO:0005829">
    <property type="term" value="C:cytosol"/>
    <property type="evidence" value="ECO:0000318"/>
    <property type="project" value="GO_Central"/>
</dbReference>
<dbReference type="GO" id="GO:0002161">
    <property type="term" value="F:aminoacyl-tRNA deacylase activity"/>
    <property type="evidence" value="ECO:0007669"/>
    <property type="project" value="InterPro"/>
</dbReference>
<dbReference type="GO" id="GO:0005524">
    <property type="term" value="F:ATP binding"/>
    <property type="evidence" value="ECO:0007669"/>
    <property type="project" value="UniProtKB-UniRule"/>
</dbReference>
<dbReference type="GO" id="GO:0004832">
    <property type="term" value="F:valine-tRNA ligase activity"/>
    <property type="evidence" value="ECO:0000318"/>
    <property type="project" value="GO_Central"/>
</dbReference>
<dbReference type="GO" id="GO:0006438">
    <property type="term" value="P:valyl-tRNA aminoacylation"/>
    <property type="evidence" value="ECO:0000318"/>
    <property type="project" value="GO_Central"/>
</dbReference>
<dbReference type="CDD" id="cd07962">
    <property type="entry name" value="Anticodon_Ia_Val"/>
    <property type="match status" value="1"/>
</dbReference>
<dbReference type="CDD" id="cd00817">
    <property type="entry name" value="ValRS_core"/>
    <property type="match status" value="1"/>
</dbReference>
<dbReference type="FunFam" id="1.10.287.380:FF:000001">
    <property type="entry name" value="Valine--tRNA ligase"/>
    <property type="match status" value="1"/>
</dbReference>
<dbReference type="FunFam" id="1.10.730.10:FF:000014">
    <property type="entry name" value="Valine--tRNA ligase"/>
    <property type="match status" value="1"/>
</dbReference>
<dbReference type="FunFam" id="3.40.50.620:FF:000032">
    <property type="entry name" value="Valine--tRNA ligase"/>
    <property type="match status" value="1"/>
</dbReference>
<dbReference type="FunFam" id="3.40.50.620:FF:000098">
    <property type="entry name" value="Valine--tRNA ligase"/>
    <property type="match status" value="1"/>
</dbReference>
<dbReference type="FunFam" id="3.90.740.10:FF:000005">
    <property type="entry name" value="Valine--tRNA ligase, mitochondrial"/>
    <property type="match status" value="1"/>
</dbReference>
<dbReference type="Gene3D" id="3.40.50.620">
    <property type="entry name" value="HUPs"/>
    <property type="match status" value="2"/>
</dbReference>
<dbReference type="Gene3D" id="1.10.730.10">
    <property type="entry name" value="Isoleucyl-tRNA Synthetase, Domain 1"/>
    <property type="match status" value="1"/>
</dbReference>
<dbReference type="Gene3D" id="1.10.287.380">
    <property type="entry name" value="Valyl-tRNA synthetase, C-terminal domain"/>
    <property type="match status" value="1"/>
</dbReference>
<dbReference type="Gene3D" id="3.90.740.10">
    <property type="entry name" value="Valyl/Leucyl/Isoleucyl-tRNA synthetase, editing domain"/>
    <property type="match status" value="1"/>
</dbReference>
<dbReference type="HAMAP" id="MF_02004">
    <property type="entry name" value="Val_tRNA_synth_type1"/>
    <property type="match status" value="1"/>
</dbReference>
<dbReference type="InterPro" id="IPR001412">
    <property type="entry name" value="aa-tRNA-synth_I_CS"/>
</dbReference>
<dbReference type="InterPro" id="IPR002300">
    <property type="entry name" value="aa-tRNA-synth_Ia"/>
</dbReference>
<dbReference type="InterPro" id="IPR033705">
    <property type="entry name" value="Anticodon_Ia_Val"/>
</dbReference>
<dbReference type="InterPro" id="IPR013155">
    <property type="entry name" value="M/V/L/I-tRNA-synth_anticd-bd"/>
</dbReference>
<dbReference type="InterPro" id="IPR014729">
    <property type="entry name" value="Rossmann-like_a/b/a_fold"/>
</dbReference>
<dbReference type="InterPro" id="IPR010978">
    <property type="entry name" value="tRNA-bd_arm"/>
</dbReference>
<dbReference type="InterPro" id="IPR009080">
    <property type="entry name" value="tRNAsynth_Ia_anticodon-bd"/>
</dbReference>
<dbReference type="InterPro" id="IPR037118">
    <property type="entry name" value="Val-tRNA_synth_C_sf"/>
</dbReference>
<dbReference type="InterPro" id="IPR019499">
    <property type="entry name" value="Val-tRNA_synth_tRNA-bd"/>
</dbReference>
<dbReference type="InterPro" id="IPR009008">
    <property type="entry name" value="Val/Leu/Ile-tRNA-synth_edit"/>
</dbReference>
<dbReference type="InterPro" id="IPR002303">
    <property type="entry name" value="Valyl-tRNA_ligase"/>
</dbReference>
<dbReference type="NCBIfam" id="NF004349">
    <property type="entry name" value="PRK05729.1"/>
    <property type="match status" value="1"/>
</dbReference>
<dbReference type="NCBIfam" id="TIGR00422">
    <property type="entry name" value="valS"/>
    <property type="match status" value="1"/>
</dbReference>
<dbReference type="PANTHER" id="PTHR11946:SF93">
    <property type="entry name" value="VALINE--TRNA LIGASE, CHLOROPLASTIC_MITOCHONDRIAL 2"/>
    <property type="match status" value="1"/>
</dbReference>
<dbReference type="PANTHER" id="PTHR11946">
    <property type="entry name" value="VALYL-TRNA SYNTHETASES"/>
    <property type="match status" value="1"/>
</dbReference>
<dbReference type="Pfam" id="PF08264">
    <property type="entry name" value="Anticodon_1"/>
    <property type="match status" value="1"/>
</dbReference>
<dbReference type="Pfam" id="PF00133">
    <property type="entry name" value="tRNA-synt_1"/>
    <property type="match status" value="1"/>
</dbReference>
<dbReference type="Pfam" id="PF10458">
    <property type="entry name" value="Val_tRNA-synt_C"/>
    <property type="match status" value="1"/>
</dbReference>
<dbReference type="PRINTS" id="PR00986">
    <property type="entry name" value="TRNASYNTHVAL"/>
</dbReference>
<dbReference type="SUPFAM" id="SSF47323">
    <property type="entry name" value="Anticodon-binding domain of a subclass of class I aminoacyl-tRNA synthetases"/>
    <property type="match status" value="1"/>
</dbReference>
<dbReference type="SUPFAM" id="SSF52374">
    <property type="entry name" value="Nucleotidylyl transferase"/>
    <property type="match status" value="1"/>
</dbReference>
<dbReference type="SUPFAM" id="SSF46589">
    <property type="entry name" value="tRNA-binding arm"/>
    <property type="match status" value="1"/>
</dbReference>
<dbReference type="SUPFAM" id="SSF50677">
    <property type="entry name" value="ValRS/IleRS/LeuRS editing domain"/>
    <property type="match status" value="1"/>
</dbReference>
<dbReference type="PROSITE" id="PS00178">
    <property type="entry name" value="AA_TRNA_LIGASE_I"/>
    <property type="match status" value="1"/>
</dbReference>
<gene>
    <name evidence="2" type="primary">valS</name>
    <name type="ordered locus">BSU28090</name>
</gene>
<evidence type="ECO:0000250" key="1"/>
<evidence type="ECO:0000255" key="2">
    <source>
        <dbReference type="HAMAP-Rule" id="MF_02004"/>
    </source>
</evidence>
<evidence type="ECO:0000269" key="3">
    <source>
    </source>
</evidence>
<evidence type="ECO:0000305" key="4"/>
<organism>
    <name type="scientific">Bacillus subtilis (strain 168)</name>
    <dbReference type="NCBI Taxonomy" id="224308"/>
    <lineage>
        <taxon>Bacteria</taxon>
        <taxon>Bacillati</taxon>
        <taxon>Bacillota</taxon>
        <taxon>Bacilli</taxon>
        <taxon>Bacillales</taxon>
        <taxon>Bacillaceae</taxon>
        <taxon>Bacillus</taxon>
    </lineage>
</organism>